<sequence length="320" mass="35257">MQTINTFSWINQRITRSISVLLLVYIITRTSISSAYPIFAQRGYENPREATGRIVCANCHLANKPVDIEVPQAVLPDTVFEAVVRIPYDSQLKQVLSNGKKGGLNVGAVIILPEGFELAPPDRLSPQMKEKIGNLSFQNYRPNQKNIIVVGPVPGQKYSEITFPILSPDPATKKDAHFLKYPIYVGGNRGRGQIYPDGSKSNNTFYSATAAGIVSKIIRKEKGGYEITITDASDSHQVVEIIPPGPELLVSEGEYLKFDQPLTSNPNVGGFGQGDGEIVLQDPLRVQGLLFFLASVILAQIFLVLKKKQFEKVQLAEMNL</sequence>
<organism>
    <name type="scientific">Cuscuta exaltata</name>
    <name type="common">Tall dodder</name>
    <dbReference type="NCBI Taxonomy" id="476139"/>
    <lineage>
        <taxon>Eukaryota</taxon>
        <taxon>Viridiplantae</taxon>
        <taxon>Streptophyta</taxon>
        <taxon>Embryophyta</taxon>
        <taxon>Tracheophyta</taxon>
        <taxon>Spermatophyta</taxon>
        <taxon>Magnoliopsida</taxon>
        <taxon>eudicotyledons</taxon>
        <taxon>Gunneridae</taxon>
        <taxon>Pentapetalae</taxon>
        <taxon>asterids</taxon>
        <taxon>lamiids</taxon>
        <taxon>Solanales</taxon>
        <taxon>Convolvulaceae</taxon>
        <taxon>Cuscuteae</taxon>
        <taxon>Cuscuta</taxon>
        <taxon>Cuscuta subgen. Monogynella</taxon>
    </lineage>
</organism>
<reference key="1">
    <citation type="journal article" date="2007" name="BMC Plant Biol.">
        <title>Complete plastid genome sequences suggest strong selection for retention of photosynthetic genes in the parasitic plant genus Cuscuta.</title>
        <authorList>
            <person name="McNeal J.R."/>
            <person name="Kuehl J.V."/>
            <person name="Boore J.L."/>
            <person name="dePamphilis C.W."/>
        </authorList>
    </citation>
    <scope>NUCLEOTIDE SEQUENCE [LARGE SCALE GENOMIC DNA]</scope>
</reference>
<feature type="signal peptide" evidence="2">
    <location>
        <begin position="1"/>
        <end position="35"/>
    </location>
</feature>
<feature type="chain" id="PRO_0000342057" description="Cytochrome f">
    <location>
        <begin position="36"/>
        <end position="320"/>
    </location>
</feature>
<feature type="transmembrane region" description="Helical" evidence="2">
    <location>
        <begin position="286"/>
        <end position="306"/>
    </location>
</feature>
<feature type="binding site" description="axial binding residue" evidence="2">
    <location>
        <position position="36"/>
    </location>
    <ligand>
        <name>heme</name>
        <dbReference type="ChEBI" id="CHEBI:30413"/>
    </ligand>
    <ligandPart>
        <name>Fe</name>
        <dbReference type="ChEBI" id="CHEBI:18248"/>
    </ligandPart>
</feature>
<feature type="binding site" description="covalent" evidence="2">
    <location>
        <position position="56"/>
    </location>
    <ligand>
        <name>heme</name>
        <dbReference type="ChEBI" id="CHEBI:30413"/>
    </ligand>
</feature>
<feature type="binding site" description="covalent" evidence="2">
    <location>
        <position position="59"/>
    </location>
    <ligand>
        <name>heme</name>
        <dbReference type="ChEBI" id="CHEBI:30413"/>
    </ligand>
</feature>
<feature type="binding site" description="axial binding residue" evidence="2">
    <location>
        <position position="60"/>
    </location>
    <ligand>
        <name>heme</name>
        <dbReference type="ChEBI" id="CHEBI:30413"/>
    </ligand>
    <ligandPart>
        <name>Fe</name>
        <dbReference type="ChEBI" id="CHEBI:18248"/>
    </ligandPart>
</feature>
<dbReference type="EMBL" id="EU189132">
    <property type="protein sequence ID" value="ABW83702.1"/>
    <property type="molecule type" value="Genomic_DNA"/>
</dbReference>
<dbReference type="RefSeq" id="YP_001542538.1">
    <property type="nucleotide sequence ID" value="NC_009963.1"/>
</dbReference>
<dbReference type="SMR" id="A8W3D1"/>
<dbReference type="GeneID" id="5729580"/>
<dbReference type="GO" id="GO:0009535">
    <property type="term" value="C:chloroplast thylakoid membrane"/>
    <property type="evidence" value="ECO:0007669"/>
    <property type="project" value="TreeGrafter"/>
</dbReference>
<dbReference type="GO" id="GO:0009055">
    <property type="term" value="F:electron transfer activity"/>
    <property type="evidence" value="ECO:0007669"/>
    <property type="project" value="UniProtKB-UniRule"/>
</dbReference>
<dbReference type="GO" id="GO:0020037">
    <property type="term" value="F:heme binding"/>
    <property type="evidence" value="ECO:0007669"/>
    <property type="project" value="InterPro"/>
</dbReference>
<dbReference type="GO" id="GO:0005506">
    <property type="term" value="F:iron ion binding"/>
    <property type="evidence" value="ECO:0007669"/>
    <property type="project" value="InterPro"/>
</dbReference>
<dbReference type="GO" id="GO:0015979">
    <property type="term" value="P:photosynthesis"/>
    <property type="evidence" value="ECO:0007669"/>
    <property type="project" value="UniProtKB-UniRule"/>
</dbReference>
<dbReference type="FunFam" id="1.20.5.700:FF:000001">
    <property type="entry name" value="Cytochrome f"/>
    <property type="match status" value="1"/>
</dbReference>
<dbReference type="FunFam" id="2.40.50.100:FF:000007">
    <property type="entry name" value="Cytochrome f"/>
    <property type="match status" value="1"/>
</dbReference>
<dbReference type="FunFam" id="2.60.40.830:FF:000001">
    <property type="entry name" value="Cytochrome f"/>
    <property type="match status" value="1"/>
</dbReference>
<dbReference type="Gene3D" id="2.40.50.100">
    <property type="match status" value="1"/>
</dbReference>
<dbReference type="Gene3D" id="2.60.40.830">
    <property type="entry name" value="Cytochrome f large domain"/>
    <property type="match status" value="1"/>
</dbReference>
<dbReference type="Gene3D" id="1.20.5.700">
    <property type="entry name" value="Single helix bin"/>
    <property type="match status" value="1"/>
</dbReference>
<dbReference type="HAMAP" id="MF_00610">
    <property type="entry name" value="Cytb6_f_cytF"/>
    <property type="match status" value="1"/>
</dbReference>
<dbReference type="InterPro" id="IPR024058">
    <property type="entry name" value="Cyt-f_TM"/>
</dbReference>
<dbReference type="InterPro" id="IPR002325">
    <property type="entry name" value="Cyt_f"/>
</dbReference>
<dbReference type="InterPro" id="IPR024094">
    <property type="entry name" value="Cyt_f_lg_dom"/>
</dbReference>
<dbReference type="InterPro" id="IPR036826">
    <property type="entry name" value="Cyt_f_lg_dom_sf"/>
</dbReference>
<dbReference type="InterPro" id="IPR011054">
    <property type="entry name" value="Rudment_hybrid_motif"/>
</dbReference>
<dbReference type="PANTHER" id="PTHR33288">
    <property type="match status" value="1"/>
</dbReference>
<dbReference type="PANTHER" id="PTHR33288:SF10">
    <property type="entry name" value="CYTOCHROME F"/>
    <property type="match status" value="1"/>
</dbReference>
<dbReference type="Pfam" id="PF01333">
    <property type="entry name" value="Apocytochr_F_C"/>
    <property type="match status" value="1"/>
</dbReference>
<dbReference type="Pfam" id="PF16639">
    <property type="entry name" value="Apocytochr_F_N"/>
    <property type="match status" value="1"/>
</dbReference>
<dbReference type="PRINTS" id="PR00610">
    <property type="entry name" value="CYTOCHROMEF"/>
</dbReference>
<dbReference type="SUPFAM" id="SSF103431">
    <property type="entry name" value="Cytochrome f subunit of the cytochrome b6f complex, transmembrane anchor"/>
    <property type="match status" value="1"/>
</dbReference>
<dbReference type="SUPFAM" id="SSF49441">
    <property type="entry name" value="Cytochrome f, large domain"/>
    <property type="match status" value="1"/>
</dbReference>
<dbReference type="SUPFAM" id="SSF51246">
    <property type="entry name" value="Rudiment single hybrid motif"/>
    <property type="match status" value="1"/>
</dbReference>
<dbReference type="PROSITE" id="PS51010">
    <property type="entry name" value="CYTF"/>
    <property type="match status" value="1"/>
</dbReference>
<accession>A8W3D1</accession>
<proteinExistence type="inferred from homology"/>
<keyword id="KW-0249">Electron transport</keyword>
<keyword id="KW-0349">Heme</keyword>
<keyword id="KW-0408">Iron</keyword>
<keyword id="KW-0472">Membrane</keyword>
<keyword id="KW-0479">Metal-binding</keyword>
<keyword id="KW-0602">Photosynthesis</keyword>
<keyword id="KW-0934">Plastid</keyword>
<keyword id="KW-0732">Signal</keyword>
<keyword id="KW-0793">Thylakoid</keyword>
<keyword id="KW-0812">Transmembrane</keyword>
<keyword id="KW-1133">Transmembrane helix</keyword>
<keyword id="KW-0813">Transport</keyword>
<geneLocation type="plastid"/>
<comment type="function">
    <text evidence="2">Component of the cytochrome b6-f complex, which mediates electron transfer between photosystem II (PSII) and photosystem I (PSI), cyclic electron flow around PSI, and state transitions.</text>
</comment>
<comment type="cofactor">
    <cofactor evidence="2">
        <name>heme</name>
        <dbReference type="ChEBI" id="CHEBI:30413"/>
    </cofactor>
    <text evidence="2">Binds 1 heme group covalently.</text>
</comment>
<comment type="subunit">
    <text evidence="1">The 4 large subunits of the cytochrome b6-f complex are cytochrome b6, subunit IV (17 kDa polypeptide, petD), cytochrome f and the Rieske protein, while the 4 small subunits are PetG, PetL, PetM and PetN. The complex functions as a dimer (By similarity).</text>
</comment>
<comment type="subcellular location">
    <subcellularLocation>
        <location evidence="1">Plastid thylakoid membrane</location>
        <topology evidence="2">Single-pass membrane protein</topology>
    </subcellularLocation>
</comment>
<comment type="similarity">
    <text evidence="2">Belongs to the cytochrome f family.</text>
</comment>
<comment type="caution">
    <text evidence="3">Young tissue from this organism is photosynthetic and contains some thylakoids, although the photosynthetic activity does not exceed the light compensation point.</text>
</comment>
<protein>
    <recommendedName>
        <fullName evidence="2">Cytochrome f</fullName>
    </recommendedName>
</protein>
<gene>
    <name evidence="2" type="primary">petA</name>
</gene>
<evidence type="ECO:0000250" key="1"/>
<evidence type="ECO:0000255" key="2">
    <source>
        <dbReference type="HAMAP-Rule" id="MF_00610"/>
    </source>
</evidence>
<evidence type="ECO:0000305" key="3"/>
<name>CYF_CUSEX</name>